<gene>
    <name type="primary">splC</name>
    <name type="ordered locus">SAOUHSC_01939</name>
</gene>
<protein>
    <recommendedName>
        <fullName>Serine protease SplC</fullName>
        <ecNumber>3.4.21.-</ecNumber>
    </recommendedName>
</protein>
<keyword id="KW-0002">3D-structure</keyword>
<keyword id="KW-0903">Direct protein sequencing</keyword>
<keyword id="KW-0378">Hydrolase</keyword>
<keyword id="KW-0645">Protease</keyword>
<keyword id="KW-1185">Reference proteome</keyword>
<keyword id="KW-0964">Secreted</keyword>
<keyword id="KW-0720">Serine protease</keyword>
<keyword id="KW-0732">Signal</keyword>
<proteinExistence type="evidence at protein level"/>
<name>SPLC_STAA8</name>
<sequence length="239" mass="26098">MNKNIVIKSMAALAILTSVTGINAAVVEETQQIANAEKNVTQVKDTNIFPYNGVVSFKDATGFVIGKNTIITNKHVSKDYKVGDRITAHPNGDKGNGGIYKIKSISDYPGDEDISVMNIEEQAVERGPKGFNFNENVQAFNFAKDAKVDDKIKVIGYPLPAQNSFKQFESTGTIKRIKDNILNFDAYIEPGNSGSPVLNSNNEVIGVVYGGIGKIGSEYNGAVYFTPQIKDFIQKHIEQ</sequence>
<feature type="signal peptide" evidence="1">
    <location>
        <begin position="1"/>
        <end position="36"/>
    </location>
</feature>
<feature type="chain" id="PRO_0000359560" description="Serine protease SplC">
    <location>
        <begin position="37"/>
        <end position="239"/>
    </location>
</feature>
<feature type="active site" description="Charge relay system" evidence="2">
    <location>
        <position position="75"/>
    </location>
</feature>
<feature type="active site" description="Charge relay system" evidence="2">
    <location>
        <position position="113"/>
    </location>
</feature>
<feature type="active site" description="Charge relay system" evidence="2">
    <location>
        <position position="193"/>
    </location>
</feature>
<feature type="strand" evidence="3">
    <location>
        <begin position="40"/>
        <end position="42"/>
    </location>
</feature>
<feature type="helix" evidence="3">
    <location>
        <begin position="51"/>
        <end position="53"/>
    </location>
</feature>
<feature type="strand" evidence="3">
    <location>
        <begin position="54"/>
        <end position="56"/>
    </location>
</feature>
<feature type="strand" evidence="3">
    <location>
        <begin position="61"/>
        <end position="66"/>
    </location>
</feature>
<feature type="strand" evidence="3">
    <location>
        <begin position="69"/>
        <end position="72"/>
    </location>
</feature>
<feature type="helix" evidence="3">
    <location>
        <begin position="74"/>
        <end position="79"/>
    </location>
</feature>
<feature type="strand" evidence="3">
    <location>
        <begin position="85"/>
        <end position="89"/>
    </location>
</feature>
<feature type="helix" evidence="3">
    <location>
        <begin position="92"/>
        <end position="94"/>
    </location>
</feature>
<feature type="strand" evidence="3">
    <location>
        <begin position="99"/>
        <end position="107"/>
    </location>
</feature>
<feature type="strand" evidence="3">
    <location>
        <begin position="109"/>
        <end position="113"/>
    </location>
</feature>
<feature type="strand" evidence="3">
    <location>
        <begin position="115"/>
        <end position="119"/>
    </location>
</feature>
<feature type="strand" evidence="3">
    <location>
        <begin position="121"/>
        <end position="127"/>
    </location>
</feature>
<feature type="strand" evidence="3">
    <location>
        <begin position="130"/>
        <end position="132"/>
    </location>
</feature>
<feature type="helix" evidence="3">
    <location>
        <begin position="133"/>
        <end position="135"/>
    </location>
</feature>
<feature type="strand" evidence="3">
    <location>
        <begin position="151"/>
        <end position="156"/>
    </location>
</feature>
<feature type="turn" evidence="3">
    <location>
        <begin position="160"/>
        <end position="164"/>
    </location>
</feature>
<feature type="strand" evidence="3">
    <location>
        <begin position="168"/>
        <end position="178"/>
    </location>
</feature>
<feature type="strand" evidence="3">
    <location>
        <begin position="181"/>
        <end position="185"/>
    </location>
</feature>
<feature type="strand" evidence="3">
    <location>
        <begin position="196"/>
        <end position="198"/>
    </location>
</feature>
<feature type="strand" evidence="3">
    <location>
        <begin position="204"/>
        <end position="208"/>
    </location>
</feature>
<feature type="strand" evidence="3">
    <location>
        <begin position="218"/>
        <end position="224"/>
    </location>
</feature>
<feature type="helix" evidence="3">
    <location>
        <begin position="227"/>
        <end position="234"/>
    </location>
</feature>
<evidence type="ECO:0000269" key="1">
    <source>
    </source>
</evidence>
<evidence type="ECO:0000305" key="2"/>
<evidence type="ECO:0007829" key="3">
    <source>
        <dbReference type="PDB" id="2AS9"/>
    </source>
</evidence>
<accession>Q2FXC4</accession>
<accession>Q9KH49</accession>
<dbReference type="EC" id="3.4.21.-"/>
<dbReference type="EMBL" id="AF271715">
    <property type="protein sequence ID" value="AAF97927.1"/>
    <property type="molecule type" value="Genomic_DNA"/>
</dbReference>
<dbReference type="EMBL" id="CP000253">
    <property type="protein sequence ID" value="ABD31002.1"/>
    <property type="molecule type" value="Genomic_DNA"/>
</dbReference>
<dbReference type="RefSeq" id="WP_001038867.1">
    <property type="nucleotide sequence ID" value="NZ_LS483365.1"/>
</dbReference>
<dbReference type="RefSeq" id="YP_500440.1">
    <property type="nucleotide sequence ID" value="NC_007795.1"/>
</dbReference>
<dbReference type="PDB" id="2AS9">
    <property type="method" value="X-ray"/>
    <property type="resolution" value="1.70 A"/>
    <property type="chains" value="A/B=37-239"/>
</dbReference>
<dbReference type="PDBsum" id="2AS9"/>
<dbReference type="SMR" id="Q2FXC4"/>
<dbReference type="STRING" id="93061.SAOUHSC_01939"/>
<dbReference type="MEROPS" id="S01.283"/>
<dbReference type="PaxDb" id="1280-SAXN108_1844"/>
<dbReference type="GeneID" id="3921023"/>
<dbReference type="KEGG" id="sao:SAOUHSC_01939"/>
<dbReference type="PATRIC" id="fig|93061.5.peg.1765"/>
<dbReference type="eggNOG" id="COG3591">
    <property type="taxonomic scope" value="Bacteria"/>
</dbReference>
<dbReference type="HOGENOM" id="CLU_073589_2_0_9"/>
<dbReference type="OrthoDB" id="191045at2"/>
<dbReference type="EvolutionaryTrace" id="Q2FXC4"/>
<dbReference type="PHI-base" id="PHI:11223"/>
<dbReference type="Proteomes" id="UP000008816">
    <property type="component" value="Chromosome"/>
</dbReference>
<dbReference type="GO" id="GO:0005576">
    <property type="term" value="C:extracellular region"/>
    <property type="evidence" value="ECO:0007669"/>
    <property type="project" value="UniProtKB-SubCell"/>
</dbReference>
<dbReference type="GO" id="GO:0004252">
    <property type="term" value="F:serine-type endopeptidase activity"/>
    <property type="evidence" value="ECO:0007669"/>
    <property type="project" value="InterPro"/>
</dbReference>
<dbReference type="GO" id="GO:0006508">
    <property type="term" value="P:proteolysis"/>
    <property type="evidence" value="ECO:0007669"/>
    <property type="project" value="UniProtKB-KW"/>
</dbReference>
<dbReference type="Gene3D" id="2.40.10.10">
    <property type="entry name" value="Trypsin-like serine proteases"/>
    <property type="match status" value="2"/>
</dbReference>
<dbReference type="InterPro" id="IPR009003">
    <property type="entry name" value="Peptidase_S1_PA"/>
</dbReference>
<dbReference type="InterPro" id="IPR043504">
    <property type="entry name" value="Peptidase_S1_PA_chymotrypsin"/>
</dbReference>
<dbReference type="InterPro" id="IPR008256">
    <property type="entry name" value="Peptidase_S1B"/>
</dbReference>
<dbReference type="InterPro" id="IPR008353">
    <property type="entry name" value="Peptidase_S1B_tx"/>
</dbReference>
<dbReference type="InterPro" id="IPR001254">
    <property type="entry name" value="Trypsin_dom"/>
</dbReference>
<dbReference type="InterPro" id="IPR028301">
    <property type="entry name" value="V8_his_AS"/>
</dbReference>
<dbReference type="PANTHER" id="PTHR43019:SF23">
    <property type="entry name" value="PROTEASE DO-LIKE 5, CHLOROPLASTIC"/>
    <property type="match status" value="1"/>
</dbReference>
<dbReference type="PANTHER" id="PTHR43019">
    <property type="entry name" value="SERINE ENDOPROTEASE DEGS"/>
    <property type="match status" value="1"/>
</dbReference>
<dbReference type="Pfam" id="PF00089">
    <property type="entry name" value="Trypsin"/>
    <property type="match status" value="1"/>
</dbReference>
<dbReference type="PRINTS" id="PR01774">
    <property type="entry name" value="EXFOLTOXIN"/>
</dbReference>
<dbReference type="PRINTS" id="PR00839">
    <property type="entry name" value="V8PROTEASE"/>
</dbReference>
<dbReference type="SUPFAM" id="SSF50494">
    <property type="entry name" value="Trypsin-like serine proteases"/>
    <property type="match status" value="1"/>
</dbReference>
<dbReference type="PROSITE" id="PS00672">
    <property type="entry name" value="V8_HIS"/>
    <property type="match status" value="1"/>
</dbReference>
<organism>
    <name type="scientific">Staphylococcus aureus (strain NCTC 8325 / PS 47)</name>
    <dbReference type="NCBI Taxonomy" id="93061"/>
    <lineage>
        <taxon>Bacteria</taxon>
        <taxon>Bacillati</taxon>
        <taxon>Bacillota</taxon>
        <taxon>Bacilli</taxon>
        <taxon>Bacillales</taxon>
        <taxon>Staphylococcaceae</taxon>
        <taxon>Staphylococcus</taxon>
    </lineage>
</organism>
<comment type="subcellular location">
    <subcellularLocation>
        <location evidence="1">Secreted</location>
    </subcellularLocation>
</comment>
<comment type="developmental stage">
    <text evidence="1">Maximally expressed during early stationary phase.</text>
</comment>
<comment type="induction">
    <text evidence="1">Positively regulated by agr (accessory gene regulator).</text>
</comment>
<comment type="similarity">
    <text evidence="2">Belongs to the peptidase S1B family.</text>
</comment>
<reference key="1">
    <citation type="journal article" date="2001" name="Infect. Immun.">
        <title>Molecular characterization of a novel Staphylococcus aureus serine protease operon.</title>
        <authorList>
            <person name="Reed S.B."/>
            <person name="Wesson C.A."/>
            <person name="Liou L.E."/>
            <person name="Trumble W.R."/>
            <person name="Schlievert P.M."/>
            <person name="Bohach G.A."/>
            <person name="Bayles K.W."/>
        </authorList>
    </citation>
    <scope>NUCLEOTIDE SEQUENCE [GENOMIC DNA]</scope>
    <scope>PROTEIN SEQUENCE OF 37-46</scope>
    <scope>SUBCELLULAR LOCATION</scope>
    <scope>DEVELOPMENTAL STAGE</scope>
    <scope>INDUCTION</scope>
</reference>
<reference key="2">
    <citation type="book" date="2006" name="Gram positive pathogens, 2nd edition">
        <title>The Staphylococcus aureus NCTC 8325 genome.</title>
        <editorList>
            <person name="Fischetti V."/>
            <person name="Novick R."/>
            <person name="Ferretti J."/>
            <person name="Portnoy D."/>
            <person name="Rood J."/>
        </editorList>
        <authorList>
            <person name="Gillaspy A.F."/>
            <person name="Worrell V."/>
            <person name="Orvis J."/>
            <person name="Roe B.A."/>
            <person name="Dyer D.W."/>
            <person name="Iandolo J.J."/>
        </authorList>
    </citation>
    <scope>NUCLEOTIDE SEQUENCE [LARGE SCALE GENOMIC DNA]</scope>
    <source>
        <strain>NCTC 8325 / PS 47</strain>
    </source>
</reference>
<reference key="3">
    <citation type="journal article" date="2006" name="J. Mol. Biol.">
        <title>Functional and structural characterization of Spl proteases from Staphylococcus aureus.</title>
        <authorList>
            <person name="Popowicz G.M."/>
            <person name="Dubin G."/>
            <person name="Stec-Niemczyk J."/>
            <person name="Czarny A."/>
            <person name="Dubin A."/>
            <person name="Potempa J."/>
            <person name="Holak T.A."/>
        </authorList>
    </citation>
    <scope>X-RAY CRYSTALLOGRAPHY (1.70 ANGSTROMS) OF 37-239</scope>
</reference>